<reference key="1">
    <citation type="journal article" date="2007" name="Nat. Genet.">
        <title>Genomic analysis of Bartonella identifies type IV secretion systems as host adaptability factors.</title>
        <authorList>
            <person name="Saenz H.L."/>
            <person name="Engel P."/>
            <person name="Stoeckli M.C."/>
            <person name="Lanz C."/>
            <person name="Raddatz G."/>
            <person name="Vayssier-Taussat M."/>
            <person name="Birtles R."/>
            <person name="Schuster S.C."/>
            <person name="Dehio C."/>
        </authorList>
    </citation>
    <scope>NUCLEOTIDE SEQUENCE [LARGE SCALE GENOMIC DNA]</scope>
    <source>
        <strain>CIP 105476 / IBS 506</strain>
    </source>
</reference>
<dbReference type="EMBL" id="AM260525">
    <property type="protein sequence ID" value="CAK01842.1"/>
    <property type="molecule type" value="Genomic_DNA"/>
</dbReference>
<dbReference type="RefSeq" id="WP_012231981.1">
    <property type="nucleotide sequence ID" value="NC_010161.1"/>
</dbReference>
<dbReference type="SMR" id="A9IVZ8"/>
<dbReference type="KEGG" id="btr:BT_1496"/>
<dbReference type="eggNOG" id="COG0099">
    <property type="taxonomic scope" value="Bacteria"/>
</dbReference>
<dbReference type="HOGENOM" id="CLU_103849_1_2_5"/>
<dbReference type="Proteomes" id="UP000001592">
    <property type="component" value="Chromosome"/>
</dbReference>
<dbReference type="GO" id="GO:0005829">
    <property type="term" value="C:cytosol"/>
    <property type="evidence" value="ECO:0007669"/>
    <property type="project" value="TreeGrafter"/>
</dbReference>
<dbReference type="GO" id="GO:0015935">
    <property type="term" value="C:small ribosomal subunit"/>
    <property type="evidence" value="ECO:0007669"/>
    <property type="project" value="TreeGrafter"/>
</dbReference>
<dbReference type="GO" id="GO:0019843">
    <property type="term" value="F:rRNA binding"/>
    <property type="evidence" value="ECO:0007669"/>
    <property type="project" value="UniProtKB-UniRule"/>
</dbReference>
<dbReference type="GO" id="GO:0003735">
    <property type="term" value="F:structural constituent of ribosome"/>
    <property type="evidence" value="ECO:0007669"/>
    <property type="project" value="InterPro"/>
</dbReference>
<dbReference type="GO" id="GO:0000049">
    <property type="term" value="F:tRNA binding"/>
    <property type="evidence" value="ECO:0007669"/>
    <property type="project" value="UniProtKB-UniRule"/>
</dbReference>
<dbReference type="GO" id="GO:0006412">
    <property type="term" value="P:translation"/>
    <property type="evidence" value="ECO:0007669"/>
    <property type="project" value="UniProtKB-UniRule"/>
</dbReference>
<dbReference type="FunFam" id="1.10.8.50:FF:000001">
    <property type="entry name" value="30S ribosomal protein S13"/>
    <property type="match status" value="1"/>
</dbReference>
<dbReference type="FunFam" id="4.10.910.10:FF:000001">
    <property type="entry name" value="30S ribosomal protein S13"/>
    <property type="match status" value="1"/>
</dbReference>
<dbReference type="Gene3D" id="1.10.8.50">
    <property type="match status" value="1"/>
</dbReference>
<dbReference type="Gene3D" id="4.10.910.10">
    <property type="entry name" value="30s ribosomal protein s13, domain 2"/>
    <property type="match status" value="1"/>
</dbReference>
<dbReference type="HAMAP" id="MF_01315">
    <property type="entry name" value="Ribosomal_uS13"/>
    <property type="match status" value="1"/>
</dbReference>
<dbReference type="InterPro" id="IPR027437">
    <property type="entry name" value="Rbsml_uS13_C"/>
</dbReference>
<dbReference type="InterPro" id="IPR001892">
    <property type="entry name" value="Ribosomal_uS13"/>
</dbReference>
<dbReference type="InterPro" id="IPR010979">
    <property type="entry name" value="Ribosomal_uS13-like_H2TH"/>
</dbReference>
<dbReference type="InterPro" id="IPR019980">
    <property type="entry name" value="Ribosomal_uS13_bac-type"/>
</dbReference>
<dbReference type="InterPro" id="IPR018269">
    <property type="entry name" value="Ribosomal_uS13_CS"/>
</dbReference>
<dbReference type="NCBIfam" id="TIGR03631">
    <property type="entry name" value="uS13_bact"/>
    <property type="match status" value="1"/>
</dbReference>
<dbReference type="PANTHER" id="PTHR10871">
    <property type="entry name" value="30S RIBOSOMAL PROTEIN S13/40S RIBOSOMAL PROTEIN S18"/>
    <property type="match status" value="1"/>
</dbReference>
<dbReference type="PANTHER" id="PTHR10871:SF1">
    <property type="entry name" value="SMALL RIBOSOMAL SUBUNIT PROTEIN US13M"/>
    <property type="match status" value="1"/>
</dbReference>
<dbReference type="Pfam" id="PF00416">
    <property type="entry name" value="Ribosomal_S13"/>
    <property type="match status" value="1"/>
</dbReference>
<dbReference type="PIRSF" id="PIRSF002134">
    <property type="entry name" value="Ribosomal_S13"/>
    <property type="match status" value="1"/>
</dbReference>
<dbReference type="SUPFAM" id="SSF46946">
    <property type="entry name" value="S13-like H2TH domain"/>
    <property type="match status" value="1"/>
</dbReference>
<dbReference type="PROSITE" id="PS00646">
    <property type="entry name" value="RIBOSOMAL_S13_1"/>
    <property type="match status" value="1"/>
</dbReference>
<dbReference type="PROSITE" id="PS50159">
    <property type="entry name" value="RIBOSOMAL_S13_2"/>
    <property type="match status" value="1"/>
</dbReference>
<keyword id="KW-0687">Ribonucleoprotein</keyword>
<keyword id="KW-0689">Ribosomal protein</keyword>
<keyword id="KW-0694">RNA-binding</keyword>
<keyword id="KW-0699">rRNA-binding</keyword>
<keyword id="KW-0820">tRNA-binding</keyword>
<proteinExistence type="inferred from homology"/>
<comment type="function">
    <text evidence="1">Located at the top of the head of the 30S subunit, it contacts several helices of the 16S rRNA. In the 70S ribosome it contacts the 23S rRNA (bridge B1a) and protein L5 of the 50S subunit (bridge B1b), connecting the 2 subunits; these bridges are implicated in subunit movement. Contacts the tRNAs in the A and P-sites.</text>
</comment>
<comment type="subunit">
    <text evidence="1">Part of the 30S ribosomal subunit. Forms a loose heterodimer with protein S19. Forms two bridges to the 50S subunit in the 70S ribosome.</text>
</comment>
<comment type="similarity">
    <text evidence="1">Belongs to the universal ribosomal protein uS13 family.</text>
</comment>
<name>RS13_BART1</name>
<feature type="chain" id="PRO_1000086228" description="Small ribosomal subunit protein uS13">
    <location>
        <begin position="1"/>
        <end position="122"/>
    </location>
</feature>
<feature type="region of interest" description="Disordered" evidence="2">
    <location>
        <begin position="97"/>
        <end position="122"/>
    </location>
</feature>
<evidence type="ECO:0000255" key="1">
    <source>
        <dbReference type="HAMAP-Rule" id="MF_01315"/>
    </source>
</evidence>
<evidence type="ECO:0000256" key="2">
    <source>
        <dbReference type="SAM" id="MobiDB-lite"/>
    </source>
</evidence>
<evidence type="ECO:0000305" key="3"/>
<gene>
    <name evidence="1" type="primary">rpsM</name>
    <name type="ordered locus">BT_1496</name>
</gene>
<sequence>MARIAGVNIPTNKRVIIALQYIHGIGPKFAQEITEKVGIPTGRRVHELSDAEVLQIREAIDQGYQVEGDLRREVAMNVKRLMDLGCYRGLRHRRSLPVRGQRTHTNARTRKGPAKAIAGKKK</sequence>
<protein>
    <recommendedName>
        <fullName evidence="1">Small ribosomal subunit protein uS13</fullName>
    </recommendedName>
    <alternativeName>
        <fullName evidence="3">30S ribosomal protein S13</fullName>
    </alternativeName>
</protein>
<organism>
    <name type="scientific">Bartonella tribocorum (strain CIP 105476 / IBS 506)</name>
    <dbReference type="NCBI Taxonomy" id="382640"/>
    <lineage>
        <taxon>Bacteria</taxon>
        <taxon>Pseudomonadati</taxon>
        <taxon>Pseudomonadota</taxon>
        <taxon>Alphaproteobacteria</taxon>
        <taxon>Hyphomicrobiales</taxon>
        <taxon>Bartonellaceae</taxon>
        <taxon>Bartonella</taxon>
    </lineage>
</organism>
<accession>A9IVZ8</accession>